<feature type="chain" id="PRO_0000124804" description="24-methylenesterol C-methyltransferase 2">
    <location>
        <begin position="1"/>
        <end position="363"/>
    </location>
</feature>
<feature type="transmembrane region" description="Helical" evidence="2">
    <location>
        <begin position="6"/>
        <end position="26"/>
    </location>
</feature>
<feature type="sequence conflict" description="In Ref. 1; AAC34989." evidence="4" ref="1">
    <original>D</original>
    <variation>E</variation>
    <location>
        <position position="214"/>
    </location>
</feature>
<feature type="sequence conflict" description="In Ref. 1; AAC34989." evidence="4" ref="1">
    <original>L</original>
    <variation>V</variation>
    <location>
        <position position="284"/>
    </location>
</feature>
<feature type="sequence conflict" description="In Ref. 1; AAC34989." evidence="4" ref="1">
    <original>AL</original>
    <variation>GF</variation>
    <location>
        <begin position="291"/>
        <end position="292"/>
    </location>
</feature>
<organism>
    <name type="scientific">Oryza sativa subsp. japonica</name>
    <name type="common">Rice</name>
    <dbReference type="NCBI Taxonomy" id="39947"/>
    <lineage>
        <taxon>Eukaryota</taxon>
        <taxon>Viridiplantae</taxon>
        <taxon>Streptophyta</taxon>
        <taxon>Embryophyta</taxon>
        <taxon>Tracheophyta</taxon>
        <taxon>Spermatophyta</taxon>
        <taxon>Magnoliopsida</taxon>
        <taxon>Liliopsida</taxon>
        <taxon>Poales</taxon>
        <taxon>Poaceae</taxon>
        <taxon>BOP clade</taxon>
        <taxon>Oryzoideae</taxon>
        <taxon>Oryzeae</taxon>
        <taxon>Oryzinae</taxon>
        <taxon>Oryza</taxon>
        <taxon>Oryza sativa</taxon>
    </lineage>
</organism>
<protein>
    <recommendedName>
        <fullName>24-methylenesterol C-methyltransferase 2</fullName>
        <shortName>24-sterol C-methyltransferase 2</shortName>
        <shortName>Sterol-C-methyltransferase 2</shortName>
        <ecNumber>2.1.1.143</ecNumber>
    </recommendedName>
</protein>
<accession>O82427</accession>
<comment type="function">
    <text evidence="1">Catalyzes the methyl transfer from S-adenosyl-methionine to the methylene group of 24-methylene lophenol to form 24-ethylidene lophenol.</text>
</comment>
<comment type="catalytic activity">
    <reaction>
        <text>24-methylidenelophenol + S-adenosyl-L-methionine = (Z)-24-ethylidenelophenol + S-adenosyl-L-homocysteine + H(+)</text>
        <dbReference type="Rhea" id="RHEA:21044"/>
        <dbReference type="ChEBI" id="CHEBI:15378"/>
        <dbReference type="ChEBI" id="CHEBI:29107"/>
        <dbReference type="ChEBI" id="CHEBI:33203"/>
        <dbReference type="ChEBI" id="CHEBI:57856"/>
        <dbReference type="ChEBI" id="CHEBI:59789"/>
        <dbReference type="EC" id="2.1.1.143"/>
    </reaction>
</comment>
<comment type="pathway">
    <text>Steroid biosynthesis; sterol biosynthesis.</text>
</comment>
<comment type="subcellular location">
    <subcellularLocation>
        <location evidence="4">Membrane</location>
        <topology evidence="4">Single-pass membrane protein</topology>
    </subcellularLocation>
</comment>
<comment type="similarity">
    <text evidence="3">Belongs to the class I-like SAM-binding methyltransferase superfamily. Erg6/SMT family.</text>
</comment>
<sequence length="363" mass="40619">MEAATMAWTAAGVGMALVYWFVWVMGAAEVKGKRAVDLKMGSITNDKVKDKYTQYWSFFRRPKETATTEASAEKVPAFVDTFYNLVTDIYEWGWGQSFHFSPSLPGRSHREATRVHEERVADLLQAKPGHRLLDVGCGVGGPMRAIAAHSGSNVVGITINEYQVNRARAHNRKAGLDSRCEVVCGNFLSMPFSDASFDGAYSIEATCHAPRLQDVYGEVFRVLKPGGLYVSYEWVTTSLYRADNPEHVEAIHGIERGDALPGLRRQDEIASIAKEVGFEVLKELDLALPPALPWWTRLKMGRIAYWRNSLVVRVLTMLRIAPKGVCEVHEMLYETAQHLTRGGETGIFTPMHMVLLRKPVESK</sequence>
<dbReference type="EC" id="2.1.1.143"/>
<dbReference type="EMBL" id="AF042333">
    <property type="protein sequence ID" value="AAC34989.1"/>
    <property type="molecule type" value="mRNA"/>
</dbReference>
<dbReference type="EMBL" id="AC118132">
    <property type="status" value="NOT_ANNOTATED_CDS"/>
    <property type="molecule type" value="Genomic_DNA"/>
</dbReference>
<dbReference type="EMBL" id="AP014959">
    <property type="protein sequence ID" value="BAS82182.1"/>
    <property type="molecule type" value="Genomic_DNA"/>
</dbReference>
<dbReference type="RefSeq" id="XP_015630743.1">
    <property type="nucleotide sequence ID" value="XM_015775257.1"/>
</dbReference>
<dbReference type="SMR" id="O82427"/>
<dbReference type="FunCoup" id="O82427">
    <property type="interactions" value="1"/>
</dbReference>
<dbReference type="STRING" id="39947.O82427"/>
<dbReference type="PaxDb" id="39947-O82427"/>
<dbReference type="EnsemblPlants" id="Os03t0136200-01">
    <property type="protein sequence ID" value="Os03t0136200-01"/>
    <property type="gene ID" value="Os03g0136200"/>
</dbReference>
<dbReference type="Gramene" id="Os03t0136200-01">
    <property type="protein sequence ID" value="Os03t0136200-01"/>
    <property type="gene ID" value="Os03g0136200"/>
</dbReference>
<dbReference type="eggNOG" id="KOG1269">
    <property type="taxonomic scope" value="Eukaryota"/>
</dbReference>
<dbReference type="HOGENOM" id="CLU_039068_5_2_1"/>
<dbReference type="InParanoid" id="O82427"/>
<dbReference type="OMA" id="ECTRIHE"/>
<dbReference type="OrthoDB" id="4310724at2759"/>
<dbReference type="PlantReactome" id="R-OSA-1119370">
    <property type="pathway name" value="Sterol biosynthesis"/>
</dbReference>
<dbReference type="UniPathway" id="UPA00766"/>
<dbReference type="Proteomes" id="UP000000763">
    <property type="component" value="Chromosome 3"/>
</dbReference>
<dbReference type="Proteomes" id="UP000059680">
    <property type="component" value="Chromosome 3"/>
</dbReference>
<dbReference type="ExpressionAtlas" id="O82427">
    <property type="expression patterns" value="baseline and differential"/>
</dbReference>
<dbReference type="GO" id="GO:0016020">
    <property type="term" value="C:membrane"/>
    <property type="evidence" value="ECO:0007669"/>
    <property type="project" value="UniProtKB-SubCell"/>
</dbReference>
<dbReference type="GO" id="GO:0030797">
    <property type="term" value="F:24-methylenesterol C-methyltransferase activity"/>
    <property type="evidence" value="ECO:0007669"/>
    <property type="project" value="UniProtKB-EC"/>
</dbReference>
<dbReference type="GO" id="GO:0032259">
    <property type="term" value="P:methylation"/>
    <property type="evidence" value="ECO:0007669"/>
    <property type="project" value="UniProtKB-KW"/>
</dbReference>
<dbReference type="GO" id="GO:0016126">
    <property type="term" value="P:sterol biosynthetic process"/>
    <property type="evidence" value="ECO:0007669"/>
    <property type="project" value="UniProtKB-UniPathway"/>
</dbReference>
<dbReference type="CDD" id="cd02440">
    <property type="entry name" value="AdoMet_MTases"/>
    <property type="match status" value="1"/>
</dbReference>
<dbReference type="FunFam" id="3.40.50.150:FF:000168">
    <property type="entry name" value="Methyltransferase"/>
    <property type="match status" value="1"/>
</dbReference>
<dbReference type="Gene3D" id="3.40.50.150">
    <property type="entry name" value="Vaccinia Virus protein VP39"/>
    <property type="match status" value="1"/>
</dbReference>
<dbReference type="InterPro" id="IPR013216">
    <property type="entry name" value="Methyltransf_11"/>
</dbReference>
<dbReference type="InterPro" id="IPR030384">
    <property type="entry name" value="MeTrfase_SMT"/>
</dbReference>
<dbReference type="InterPro" id="IPR029063">
    <property type="entry name" value="SAM-dependent_MTases_sf"/>
</dbReference>
<dbReference type="InterPro" id="IPR013705">
    <property type="entry name" value="Sterol_MeTrfase_C"/>
</dbReference>
<dbReference type="PANTHER" id="PTHR44742">
    <property type="match status" value="1"/>
</dbReference>
<dbReference type="PANTHER" id="PTHR44742:SF2">
    <property type="entry name" value="24-METHYLENESTEROL C-METHYLTRANSFERASE 2"/>
    <property type="match status" value="1"/>
</dbReference>
<dbReference type="Pfam" id="PF08241">
    <property type="entry name" value="Methyltransf_11"/>
    <property type="match status" value="1"/>
</dbReference>
<dbReference type="Pfam" id="PF08498">
    <property type="entry name" value="Sterol_MT_C"/>
    <property type="match status" value="1"/>
</dbReference>
<dbReference type="SUPFAM" id="SSF53335">
    <property type="entry name" value="S-adenosyl-L-methionine-dependent methyltransferases"/>
    <property type="match status" value="1"/>
</dbReference>
<dbReference type="PROSITE" id="PS51685">
    <property type="entry name" value="SAM_MT_ERG6_SMT"/>
    <property type="match status" value="1"/>
</dbReference>
<proteinExistence type="evidence at transcript level"/>
<evidence type="ECO:0000250" key="1"/>
<evidence type="ECO:0000255" key="2"/>
<evidence type="ECO:0000255" key="3">
    <source>
        <dbReference type="PROSITE-ProRule" id="PRU01022"/>
    </source>
</evidence>
<evidence type="ECO:0000305" key="4"/>
<name>SMT2_ORYSJ</name>
<reference key="1">
    <citation type="journal article" date="1998" name="Eur. J. Biochem.">
        <title>Two families of sterol methyltransferases are involved in the first and the second methylation steps of plant sterol biosynthesis.</title>
        <authorList>
            <person name="Bouvier-Nave P."/>
            <person name="Husselstein T."/>
            <person name="Benveniste P."/>
        </authorList>
    </citation>
    <scope>NUCLEOTIDE SEQUENCE [MRNA]</scope>
    <source>
        <strain>cv. Nipponbare</strain>
        <tissue>Callus</tissue>
    </source>
</reference>
<reference key="2">
    <citation type="journal article" date="2005" name="Genome Res.">
        <title>Sequence, annotation, and analysis of synteny between rice chromosome 3 and diverged grass species.</title>
        <authorList>
            <consortium name="The rice chromosome 3 sequencing consortium"/>
            <person name="Buell C.R."/>
            <person name="Yuan Q."/>
            <person name="Ouyang S."/>
            <person name="Liu J."/>
            <person name="Zhu W."/>
            <person name="Wang A."/>
            <person name="Maiti R."/>
            <person name="Haas B."/>
            <person name="Wortman J."/>
            <person name="Pertea M."/>
            <person name="Jones K.M."/>
            <person name="Kim M."/>
            <person name="Overton L."/>
            <person name="Tsitrin T."/>
            <person name="Fadrosh D."/>
            <person name="Bera J."/>
            <person name="Weaver B."/>
            <person name="Jin S."/>
            <person name="Johri S."/>
            <person name="Reardon M."/>
            <person name="Webb K."/>
            <person name="Hill J."/>
            <person name="Moffat K."/>
            <person name="Tallon L."/>
            <person name="Van Aken S."/>
            <person name="Lewis M."/>
            <person name="Utterback T."/>
            <person name="Feldblyum T."/>
            <person name="Zismann V."/>
            <person name="Iobst S."/>
            <person name="Hsiao J."/>
            <person name="de Vazeille A.R."/>
            <person name="Salzberg S.L."/>
            <person name="White O."/>
            <person name="Fraser C.M."/>
            <person name="Yu Y."/>
            <person name="Kim H."/>
            <person name="Rambo T."/>
            <person name="Currie J."/>
            <person name="Collura K."/>
            <person name="Kernodle-Thompson S."/>
            <person name="Wei F."/>
            <person name="Kudrna K."/>
            <person name="Ammiraju J.S.S."/>
            <person name="Luo M."/>
            <person name="Goicoechea J.L."/>
            <person name="Wing R.A."/>
            <person name="Henry D."/>
            <person name="Oates R."/>
            <person name="Palmer M."/>
            <person name="Pries G."/>
            <person name="Saski C."/>
            <person name="Simmons J."/>
            <person name="Soderlund C."/>
            <person name="Nelson W."/>
            <person name="de la Bastide M."/>
            <person name="Spiegel L."/>
            <person name="Nascimento L."/>
            <person name="Huang E."/>
            <person name="Preston R."/>
            <person name="Zutavern T."/>
            <person name="Palmer L."/>
            <person name="O'Shaughnessy A."/>
            <person name="Dike S."/>
            <person name="McCombie W.R."/>
            <person name="Minx P."/>
            <person name="Cordum H."/>
            <person name="Wilson R."/>
            <person name="Jin W."/>
            <person name="Lee H.R."/>
            <person name="Jiang J."/>
            <person name="Jackson S."/>
        </authorList>
    </citation>
    <scope>NUCLEOTIDE SEQUENCE [LARGE SCALE GENOMIC DNA]</scope>
    <source>
        <strain>cv. Nipponbare</strain>
    </source>
</reference>
<reference key="3">
    <citation type="journal article" date="2005" name="Nature">
        <title>The map-based sequence of the rice genome.</title>
        <authorList>
            <consortium name="International rice genome sequencing project (IRGSP)"/>
        </authorList>
    </citation>
    <scope>NUCLEOTIDE SEQUENCE [LARGE SCALE GENOMIC DNA]</scope>
    <source>
        <strain>cv. Nipponbare</strain>
    </source>
</reference>
<reference key="4">
    <citation type="journal article" date="2013" name="Rice">
        <title>Improvement of the Oryza sativa Nipponbare reference genome using next generation sequence and optical map data.</title>
        <authorList>
            <person name="Kawahara Y."/>
            <person name="de la Bastide M."/>
            <person name="Hamilton J.P."/>
            <person name="Kanamori H."/>
            <person name="McCombie W.R."/>
            <person name="Ouyang S."/>
            <person name="Schwartz D.C."/>
            <person name="Tanaka T."/>
            <person name="Wu J."/>
            <person name="Zhou S."/>
            <person name="Childs K.L."/>
            <person name="Davidson R.M."/>
            <person name="Lin H."/>
            <person name="Quesada-Ocampo L."/>
            <person name="Vaillancourt B."/>
            <person name="Sakai H."/>
            <person name="Lee S.S."/>
            <person name="Kim J."/>
            <person name="Numa H."/>
            <person name="Itoh T."/>
            <person name="Buell C.R."/>
            <person name="Matsumoto T."/>
        </authorList>
    </citation>
    <scope>GENOME REANNOTATION</scope>
    <source>
        <strain>cv. Nipponbare</strain>
    </source>
</reference>
<keyword id="KW-0444">Lipid biosynthesis</keyword>
<keyword id="KW-0443">Lipid metabolism</keyword>
<keyword id="KW-0472">Membrane</keyword>
<keyword id="KW-0489">Methyltransferase</keyword>
<keyword id="KW-1185">Reference proteome</keyword>
<keyword id="KW-0949">S-adenosyl-L-methionine</keyword>
<keyword id="KW-0752">Steroid biosynthesis</keyword>
<keyword id="KW-0753">Steroid metabolism</keyword>
<keyword id="KW-0756">Sterol biosynthesis</keyword>
<keyword id="KW-1207">Sterol metabolism</keyword>
<keyword id="KW-0808">Transferase</keyword>
<keyword id="KW-0812">Transmembrane</keyword>
<keyword id="KW-1133">Transmembrane helix</keyword>
<gene>
    <name type="primary">Smt2-1</name>
    <name type="ordered locus">Os03g0136200</name>
    <name type="ordered locus">LOC_Os03g04340</name>
</gene>